<feature type="chain" id="PRO_1000119831" description="Oxygen-dependent coproporphyrinogen-III oxidase">
    <location>
        <begin position="1"/>
        <end position="298"/>
    </location>
</feature>
<feature type="region of interest" description="Important for dimerization" evidence="1">
    <location>
        <begin position="239"/>
        <end position="274"/>
    </location>
</feature>
<feature type="active site" description="Proton donor" evidence="1">
    <location>
        <position position="106"/>
    </location>
</feature>
<feature type="binding site" evidence="1">
    <location>
        <position position="92"/>
    </location>
    <ligand>
        <name>substrate</name>
    </ligand>
</feature>
<feature type="binding site" evidence="1">
    <location>
        <position position="96"/>
    </location>
    <ligand>
        <name>a divalent metal cation</name>
        <dbReference type="ChEBI" id="CHEBI:60240"/>
    </ligand>
</feature>
<feature type="binding site" evidence="1">
    <location>
        <position position="106"/>
    </location>
    <ligand>
        <name>a divalent metal cation</name>
        <dbReference type="ChEBI" id="CHEBI:60240"/>
    </ligand>
</feature>
<feature type="binding site" evidence="1">
    <location>
        <begin position="108"/>
        <end position="110"/>
    </location>
    <ligand>
        <name>substrate</name>
    </ligand>
</feature>
<feature type="binding site" evidence="1">
    <location>
        <position position="145"/>
    </location>
    <ligand>
        <name>a divalent metal cation</name>
        <dbReference type="ChEBI" id="CHEBI:60240"/>
    </ligand>
</feature>
<feature type="binding site" evidence="1">
    <location>
        <position position="175"/>
    </location>
    <ligand>
        <name>a divalent metal cation</name>
        <dbReference type="ChEBI" id="CHEBI:60240"/>
    </ligand>
</feature>
<feature type="binding site" evidence="1">
    <location>
        <begin position="257"/>
        <end position="259"/>
    </location>
    <ligand>
        <name>substrate</name>
    </ligand>
</feature>
<feature type="site" description="Important for dimerization" evidence="1">
    <location>
        <position position="175"/>
    </location>
</feature>
<name>HEM6_STRMK</name>
<comment type="function">
    <text evidence="1">Involved in the heme biosynthesis. Catalyzes the aerobic oxidative decarboxylation of propionate groups of rings A and B of coproporphyrinogen-III to yield the vinyl groups in protoporphyrinogen-IX.</text>
</comment>
<comment type="catalytic activity">
    <reaction evidence="1">
        <text>coproporphyrinogen III + O2 + 2 H(+) = protoporphyrinogen IX + 2 CO2 + 2 H2O</text>
        <dbReference type="Rhea" id="RHEA:18257"/>
        <dbReference type="ChEBI" id="CHEBI:15377"/>
        <dbReference type="ChEBI" id="CHEBI:15378"/>
        <dbReference type="ChEBI" id="CHEBI:15379"/>
        <dbReference type="ChEBI" id="CHEBI:16526"/>
        <dbReference type="ChEBI" id="CHEBI:57307"/>
        <dbReference type="ChEBI" id="CHEBI:57309"/>
        <dbReference type="EC" id="1.3.3.3"/>
    </reaction>
</comment>
<comment type="cofactor">
    <cofactor evidence="1">
        <name>a divalent metal cation</name>
        <dbReference type="ChEBI" id="CHEBI:60240"/>
    </cofactor>
</comment>
<comment type="pathway">
    <text evidence="1">Porphyrin-containing compound metabolism; protoporphyrin-IX biosynthesis; protoporphyrinogen-IX from coproporphyrinogen-III (O2 route): step 1/1.</text>
</comment>
<comment type="subunit">
    <text evidence="1">Homodimer.</text>
</comment>
<comment type="subcellular location">
    <subcellularLocation>
        <location evidence="1">Cytoplasm</location>
    </subcellularLocation>
</comment>
<comment type="similarity">
    <text evidence="1">Belongs to the aerobic coproporphyrinogen-III oxidase family.</text>
</comment>
<protein>
    <recommendedName>
        <fullName evidence="1">Oxygen-dependent coproporphyrinogen-III oxidase</fullName>
        <shortName evidence="1">CPO</shortName>
        <shortName evidence="1">Coprogen oxidase</shortName>
        <shortName evidence="1">Coproporphyrinogenase</shortName>
        <ecNumber evidence="1">1.3.3.3</ecNumber>
    </recommendedName>
</protein>
<dbReference type="EC" id="1.3.3.3" evidence="1"/>
<dbReference type="EMBL" id="AM743169">
    <property type="protein sequence ID" value="CAQ47941.1"/>
    <property type="molecule type" value="Genomic_DNA"/>
</dbReference>
<dbReference type="RefSeq" id="WP_012481613.1">
    <property type="nucleotide sequence ID" value="NC_010943.1"/>
</dbReference>
<dbReference type="SMR" id="B2FND0"/>
<dbReference type="EnsemblBacteria" id="CAQ47941">
    <property type="protein sequence ID" value="CAQ47941"/>
    <property type="gene ID" value="Smlt4586"/>
</dbReference>
<dbReference type="KEGG" id="sml:Smlt4586"/>
<dbReference type="PATRIC" id="fig|522373.3.peg.4319"/>
<dbReference type="eggNOG" id="COG0408">
    <property type="taxonomic scope" value="Bacteria"/>
</dbReference>
<dbReference type="HOGENOM" id="CLU_026169_0_1_6"/>
<dbReference type="UniPathway" id="UPA00251">
    <property type="reaction ID" value="UER00322"/>
</dbReference>
<dbReference type="Proteomes" id="UP000008840">
    <property type="component" value="Chromosome"/>
</dbReference>
<dbReference type="GO" id="GO:0005737">
    <property type="term" value="C:cytoplasm"/>
    <property type="evidence" value="ECO:0007669"/>
    <property type="project" value="UniProtKB-SubCell"/>
</dbReference>
<dbReference type="GO" id="GO:0004109">
    <property type="term" value="F:coproporphyrinogen oxidase activity"/>
    <property type="evidence" value="ECO:0007669"/>
    <property type="project" value="UniProtKB-UniRule"/>
</dbReference>
<dbReference type="GO" id="GO:0046872">
    <property type="term" value="F:metal ion binding"/>
    <property type="evidence" value="ECO:0007669"/>
    <property type="project" value="UniProtKB-KW"/>
</dbReference>
<dbReference type="GO" id="GO:0042803">
    <property type="term" value="F:protein homodimerization activity"/>
    <property type="evidence" value="ECO:0000250"/>
    <property type="project" value="UniProtKB"/>
</dbReference>
<dbReference type="GO" id="GO:0006782">
    <property type="term" value="P:protoporphyrinogen IX biosynthetic process"/>
    <property type="evidence" value="ECO:0007669"/>
    <property type="project" value="UniProtKB-UniRule"/>
</dbReference>
<dbReference type="FunFam" id="3.40.1500.10:FF:000001">
    <property type="entry name" value="Oxygen-dependent coproporphyrinogen-III oxidase"/>
    <property type="match status" value="1"/>
</dbReference>
<dbReference type="Gene3D" id="3.40.1500.10">
    <property type="entry name" value="Coproporphyrinogen III oxidase, aerobic"/>
    <property type="match status" value="1"/>
</dbReference>
<dbReference type="HAMAP" id="MF_00333">
    <property type="entry name" value="Coprogen_oxidas"/>
    <property type="match status" value="1"/>
</dbReference>
<dbReference type="InterPro" id="IPR001260">
    <property type="entry name" value="Coprogen_oxidase_aer"/>
</dbReference>
<dbReference type="InterPro" id="IPR036406">
    <property type="entry name" value="Coprogen_oxidase_aer_sf"/>
</dbReference>
<dbReference type="InterPro" id="IPR018375">
    <property type="entry name" value="Coprogen_oxidase_CS"/>
</dbReference>
<dbReference type="NCBIfam" id="NF003727">
    <property type="entry name" value="PRK05330.1"/>
    <property type="match status" value="1"/>
</dbReference>
<dbReference type="PANTHER" id="PTHR10755">
    <property type="entry name" value="COPROPORPHYRINOGEN III OXIDASE, MITOCHONDRIAL"/>
    <property type="match status" value="1"/>
</dbReference>
<dbReference type="PANTHER" id="PTHR10755:SF0">
    <property type="entry name" value="OXYGEN-DEPENDENT COPROPORPHYRINOGEN-III OXIDASE, MITOCHONDRIAL"/>
    <property type="match status" value="1"/>
</dbReference>
<dbReference type="Pfam" id="PF01218">
    <property type="entry name" value="Coprogen_oxidas"/>
    <property type="match status" value="1"/>
</dbReference>
<dbReference type="PIRSF" id="PIRSF000166">
    <property type="entry name" value="Coproporphyri_ox"/>
    <property type="match status" value="1"/>
</dbReference>
<dbReference type="PRINTS" id="PR00073">
    <property type="entry name" value="COPRGNOXDASE"/>
</dbReference>
<dbReference type="SUPFAM" id="SSF102886">
    <property type="entry name" value="Coproporphyrinogen III oxidase"/>
    <property type="match status" value="1"/>
</dbReference>
<dbReference type="PROSITE" id="PS01021">
    <property type="entry name" value="COPROGEN_OXIDASE"/>
    <property type="match status" value="1"/>
</dbReference>
<keyword id="KW-0963">Cytoplasm</keyword>
<keyword id="KW-0350">Heme biosynthesis</keyword>
<keyword id="KW-0479">Metal-binding</keyword>
<keyword id="KW-0560">Oxidoreductase</keyword>
<keyword id="KW-0627">Porphyrin biosynthesis</keyword>
<keyword id="KW-1185">Reference proteome</keyword>
<reference key="1">
    <citation type="journal article" date="2008" name="Genome Biol.">
        <title>The complete genome, comparative and functional analysis of Stenotrophomonas maltophilia reveals an organism heavily shielded by drug resistance determinants.</title>
        <authorList>
            <person name="Crossman L.C."/>
            <person name="Gould V.C."/>
            <person name="Dow J.M."/>
            <person name="Vernikos G.S."/>
            <person name="Okazaki A."/>
            <person name="Sebaihia M."/>
            <person name="Saunders D."/>
            <person name="Arrowsmith C."/>
            <person name="Carver T."/>
            <person name="Peters N."/>
            <person name="Adlem E."/>
            <person name="Kerhornou A."/>
            <person name="Lord A."/>
            <person name="Murphy L."/>
            <person name="Seeger K."/>
            <person name="Squares R."/>
            <person name="Rutter S."/>
            <person name="Quail M.A."/>
            <person name="Rajandream M.A."/>
            <person name="Harris D."/>
            <person name="Churcher C."/>
            <person name="Bentley S.D."/>
            <person name="Parkhill J."/>
            <person name="Thomson N.R."/>
            <person name="Avison M.B."/>
        </authorList>
    </citation>
    <scope>NUCLEOTIDE SEQUENCE [LARGE SCALE GENOMIC DNA]</scope>
    <source>
        <strain>K279a</strain>
    </source>
</reference>
<organism>
    <name type="scientific">Stenotrophomonas maltophilia (strain K279a)</name>
    <dbReference type="NCBI Taxonomy" id="522373"/>
    <lineage>
        <taxon>Bacteria</taxon>
        <taxon>Pseudomonadati</taxon>
        <taxon>Pseudomonadota</taxon>
        <taxon>Gammaproteobacteria</taxon>
        <taxon>Lysobacterales</taxon>
        <taxon>Lysobacteraceae</taxon>
        <taxon>Stenotrophomonas</taxon>
        <taxon>Stenotrophomonas maltophilia group</taxon>
    </lineage>
</organism>
<proteinExistence type="inferred from homology"/>
<evidence type="ECO:0000255" key="1">
    <source>
        <dbReference type="HAMAP-Rule" id="MF_00333"/>
    </source>
</evidence>
<accession>B2FND0</accession>
<gene>
    <name evidence="1" type="primary">hemF</name>
    <name type="ordered locus">Smlt4586</name>
</gene>
<sequence length="298" mass="34101">MNEFERVRAYLTDLQDRICAAIEAVDGRARFQEDLWQRAEGGGGRTRVLRDGAVFEQAGIGFSDVSGSRLPPSASANRPELAGASWRATGVSLVFHPLNPYVPTTHANVRFFQAQRDGEVVASWFGGGFDLTPFYPFDEDVQHWHQVARDLCAPFGDERYAAHKRWCDEYFFLRHRNETRGVGGLFFDDLHGDFERDFAYLRAVGDGFLDAYLPIVQQRKDAIYGEREREFQLYRRGRYVEFNLVYDRGTLFGLQSGGRSESILMSLPPRVRWEYGFTPEAGSAEARLADYLVPRDWL</sequence>